<accession>Q5BGW9</accession>
<accession>C8VUV0</accession>
<gene>
    <name type="primary">lea1</name>
    <name type="ORF">AN0211</name>
</gene>
<protein>
    <recommendedName>
        <fullName>U2 small nuclear ribonucleoprotein A'</fullName>
        <shortName>U2 snRNP A'</shortName>
    </recommendedName>
</protein>
<evidence type="ECO:0000250" key="1"/>
<evidence type="ECO:0000256" key="2">
    <source>
        <dbReference type="SAM" id="MobiDB-lite"/>
    </source>
</evidence>
<evidence type="ECO:0000305" key="3"/>
<organism>
    <name type="scientific">Emericella nidulans (strain FGSC A4 / ATCC 38163 / CBS 112.46 / NRRL 194 / M139)</name>
    <name type="common">Aspergillus nidulans</name>
    <dbReference type="NCBI Taxonomy" id="227321"/>
    <lineage>
        <taxon>Eukaryota</taxon>
        <taxon>Fungi</taxon>
        <taxon>Dikarya</taxon>
        <taxon>Ascomycota</taxon>
        <taxon>Pezizomycotina</taxon>
        <taxon>Eurotiomycetes</taxon>
        <taxon>Eurotiomycetidae</taxon>
        <taxon>Eurotiales</taxon>
        <taxon>Aspergillaceae</taxon>
        <taxon>Aspergillus</taxon>
        <taxon>Aspergillus subgen. Nidulantes</taxon>
    </lineage>
</organism>
<reference key="1">
    <citation type="journal article" date="2005" name="Nature">
        <title>Sequencing of Aspergillus nidulans and comparative analysis with A. fumigatus and A. oryzae.</title>
        <authorList>
            <person name="Galagan J.E."/>
            <person name="Calvo S.E."/>
            <person name="Cuomo C."/>
            <person name="Ma L.-J."/>
            <person name="Wortman J.R."/>
            <person name="Batzoglou S."/>
            <person name="Lee S.-I."/>
            <person name="Bastuerkmen M."/>
            <person name="Spevak C.C."/>
            <person name="Clutterbuck J."/>
            <person name="Kapitonov V."/>
            <person name="Jurka J."/>
            <person name="Scazzocchio C."/>
            <person name="Farman M.L."/>
            <person name="Butler J."/>
            <person name="Purcell S."/>
            <person name="Harris S."/>
            <person name="Braus G.H."/>
            <person name="Draht O."/>
            <person name="Busch S."/>
            <person name="D'Enfert C."/>
            <person name="Bouchier C."/>
            <person name="Goldman G.H."/>
            <person name="Bell-Pedersen D."/>
            <person name="Griffiths-Jones S."/>
            <person name="Doonan J.H."/>
            <person name="Yu J."/>
            <person name="Vienken K."/>
            <person name="Pain A."/>
            <person name="Freitag M."/>
            <person name="Selker E.U."/>
            <person name="Archer D.B."/>
            <person name="Penalva M.A."/>
            <person name="Oakley B.R."/>
            <person name="Momany M."/>
            <person name="Tanaka T."/>
            <person name="Kumagai T."/>
            <person name="Asai K."/>
            <person name="Machida M."/>
            <person name="Nierman W.C."/>
            <person name="Denning D.W."/>
            <person name="Caddick M.X."/>
            <person name="Hynes M."/>
            <person name="Paoletti M."/>
            <person name="Fischer R."/>
            <person name="Miller B.L."/>
            <person name="Dyer P.S."/>
            <person name="Sachs M.S."/>
            <person name="Osmani S.A."/>
            <person name="Birren B.W."/>
        </authorList>
    </citation>
    <scope>NUCLEOTIDE SEQUENCE [LARGE SCALE GENOMIC DNA]</scope>
    <source>
        <strain>FGSC A4 / ATCC 38163 / CBS 112.46 / NRRL 194 / M139</strain>
    </source>
</reference>
<reference key="2">
    <citation type="journal article" date="2009" name="Fungal Genet. Biol.">
        <title>The 2008 update of the Aspergillus nidulans genome annotation: a community effort.</title>
        <authorList>
            <person name="Wortman J.R."/>
            <person name="Gilsenan J.M."/>
            <person name="Joardar V."/>
            <person name="Deegan J."/>
            <person name="Clutterbuck J."/>
            <person name="Andersen M.R."/>
            <person name="Archer D."/>
            <person name="Bencina M."/>
            <person name="Braus G."/>
            <person name="Coutinho P."/>
            <person name="von Dohren H."/>
            <person name="Doonan J."/>
            <person name="Driessen A.J."/>
            <person name="Durek P."/>
            <person name="Espeso E."/>
            <person name="Fekete E."/>
            <person name="Flipphi M."/>
            <person name="Estrada C.G."/>
            <person name="Geysens S."/>
            <person name="Goldman G."/>
            <person name="de Groot P.W."/>
            <person name="Hansen K."/>
            <person name="Harris S.D."/>
            <person name="Heinekamp T."/>
            <person name="Helmstaedt K."/>
            <person name="Henrissat B."/>
            <person name="Hofmann G."/>
            <person name="Homan T."/>
            <person name="Horio T."/>
            <person name="Horiuchi H."/>
            <person name="James S."/>
            <person name="Jones M."/>
            <person name="Karaffa L."/>
            <person name="Karanyi Z."/>
            <person name="Kato M."/>
            <person name="Keller N."/>
            <person name="Kelly D.E."/>
            <person name="Kiel J.A."/>
            <person name="Kim J.M."/>
            <person name="van der Klei I.J."/>
            <person name="Klis F.M."/>
            <person name="Kovalchuk A."/>
            <person name="Krasevec N."/>
            <person name="Kubicek C.P."/>
            <person name="Liu B."/>
            <person name="Maccabe A."/>
            <person name="Meyer V."/>
            <person name="Mirabito P."/>
            <person name="Miskei M."/>
            <person name="Mos M."/>
            <person name="Mullins J."/>
            <person name="Nelson D.R."/>
            <person name="Nielsen J."/>
            <person name="Oakley B.R."/>
            <person name="Osmani S.A."/>
            <person name="Pakula T."/>
            <person name="Paszewski A."/>
            <person name="Paulsen I."/>
            <person name="Pilsyk S."/>
            <person name="Pocsi I."/>
            <person name="Punt P.J."/>
            <person name="Ram A.F."/>
            <person name="Ren Q."/>
            <person name="Robellet X."/>
            <person name="Robson G."/>
            <person name="Seiboth B."/>
            <person name="van Solingen P."/>
            <person name="Specht T."/>
            <person name="Sun J."/>
            <person name="Taheri-Talesh N."/>
            <person name="Takeshita N."/>
            <person name="Ussery D."/>
            <person name="vanKuyk P.A."/>
            <person name="Visser H."/>
            <person name="van de Vondervoort P.J."/>
            <person name="de Vries R.P."/>
            <person name="Walton J."/>
            <person name="Xiang X."/>
            <person name="Xiong Y."/>
            <person name="Zeng A.P."/>
            <person name="Brandt B.W."/>
            <person name="Cornell M.J."/>
            <person name="van den Hondel C.A."/>
            <person name="Visser J."/>
            <person name="Oliver S.G."/>
            <person name="Turner G."/>
        </authorList>
    </citation>
    <scope>GENOME REANNOTATION</scope>
    <source>
        <strain>FGSC A4 / ATCC 38163 / CBS 112.46 / NRRL 194 / M139</strain>
    </source>
</reference>
<proteinExistence type="inferred from homology"/>
<comment type="function">
    <text evidence="1">Involved in pre-mRNA splicing.</text>
</comment>
<comment type="subunit">
    <text evidence="1">Associated with the spliceosome.</text>
</comment>
<comment type="subcellular location">
    <subcellularLocation>
        <location evidence="1">Nucleus</location>
    </subcellularLocation>
</comment>
<comment type="similarity">
    <text evidence="3">Belongs to the U2 small nuclear ribonucleoprotein A family.</text>
</comment>
<name>RU2A_EMENI</name>
<sequence length="230" mass="26080">MRLTVELIQNSLSYINPLKDRELDLRDNDISSLGNFPFFPRLRMLLLARNRVRQIQPSLANSIPGLTTLVLTANNIAELADLDPLRNLTKLTHLVLLENPVTRKEYYRLWIIWRIPSVRFLDYQKVKDAERAKAAELFGTATEPTALASKILGVKSRTFDIPSGGAADQPPPEKRLRVKLTDSERKRIEKMIREAKSLQEITRLERELNEGRIPGGALDGAGNDGDQMQL</sequence>
<keyword id="KW-0433">Leucine-rich repeat</keyword>
<keyword id="KW-0507">mRNA processing</keyword>
<keyword id="KW-0508">mRNA splicing</keyword>
<keyword id="KW-0539">Nucleus</keyword>
<keyword id="KW-1185">Reference proteome</keyword>
<keyword id="KW-0677">Repeat</keyword>
<keyword id="KW-0747">Spliceosome</keyword>
<feature type="chain" id="PRO_0000074184" description="U2 small nuclear ribonucleoprotein A'">
    <location>
        <begin position="1"/>
        <end position="230"/>
    </location>
</feature>
<feature type="repeat" description="LRR 1">
    <location>
        <begin position="19"/>
        <end position="40"/>
    </location>
</feature>
<feature type="repeat" description="LRR 2">
    <location>
        <begin position="41"/>
        <end position="62"/>
    </location>
</feature>
<feature type="repeat" description="LRR 3">
    <location>
        <begin position="65"/>
        <end position="86"/>
    </location>
</feature>
<feature type="domain" description="LRRCT">
    <location>
        <begin position="99"/>
        <end position="137"/>
    </location>
</feature>
<feature type="region of interest" description="Disordered" evidence="2">
    <location>
        <begin position="211"/>
        <end position="230"/>
    </location>
</feature>
<feature type="compositionally biased region" description="Gly residues" evidence="2">
    <location>
        <begin position="213"/>
        <end position="223"/>
    </location>
</feature>
<dbReference type="EMBL" id="AACD01000005">
    <property type="protein sequence ID" value="EAA66084.1"/>
    <property type="molecule type" value="Genomic_DNA"/>
</dbReference>
<dbReference type="EMBL" id="BN001308">
    <property type="protein sequence ID" value="CBF89966.1"/>
    <property type="molecule type" value="Genomic_DNA"/>
</dbReference>
<dbReference type="RefSeq" id="XP_657815.1">
    <property type="nucleotide sequence ID" value="XM_652723.1"/>
</dbReference>
<dbReference type="SMR" id="Q5BGW9"/>
<dbReference type="FunCoup" id="Q5BGW9">
    <property type="interactions" value="1231"/>
</dbReference>
<dbReference type="STRING" id="227321.Q5BGW9"/>
<dbReference type="EnsemblFungi" id="CBF89966">
    <property type="protein sequence ID" value="CBF89966"/>
    <property type="gene ID" value="ANIA_00211"/>
</dbReference>
<dbReference type="KEGG" id="ani:ANIA_00211"/>
<dbReference type="eggNOG" id="KOG1644">
    <property type="taxonomic scope" value="Eukaryota"/>
</dbReference>
<dbReference type="HOGENOM" id="CLU_061027_1_0_1"/>
<dbReference type="InParanoid" id="Q5BGW9"/>
<dbReference type="OMA" id="PNYREYM"/>
<dbReference type="OrthoDB" id="433501at2759"/>
<dbReference type="Proteomes" id="UP000000560">
    <property type="component" value="Chromosome VIII"/>
</dbReference>
<dbReference type="GO" id="GO:0071014">
    <property type="term" value="C:post-mRNA release spliceosomal complex"/>
    <property type="evidence" value="ECO:0007669"/>
    <property type="project" value="EnsemblFungi"/>
</dbReference>
<dbReference type="GO" id="GO:0005686">
    <property type="term" value="C:U2 snRNP"/>
    <property type="evidence" value="ECO:0000318"/>
    <property type="project" value="GO_Central"/>
</dbReference>
<dbReference type="GO" id="GO:0030620">
    <property type="term" value="F:U2 snRNA binding"/>
    <property type="evidence" value="ECO:0000318"/>
    <property type="project" value="GO_Central"/>
</dbReference>
<dbReference type="GO" id="GO:0000398">
    <property type="term" value="P:mRNA splicing, via spliceosome"/>
    <property type="evidence" value="ECO:0000318"/>
    <property type="project" value="GO_Central"/>
</dbReference>
<dbReference type="Gene3D" id="3.80.10.10">
    <property type="entry name" value="Ribonuclease Inhibitor"/>
    <property type="match status" value="1"/>
</dbReference>
<dbReference type="InterPro" id="IPR001611">
    <property type="entry name" value="Leu-rich_rpt"/>
</dbReference>
<dbReference type="InterPro" id="IPR032675">
    <property type="entry name" value="LRR_dom_sf"/>
</dbReference>
<dbReference type="InterPro" id="IPR044640">
    <property type="entry name" value="RU2A"/>
</dbReference>
<dbReference type="PANTHER" id="PTHR10552">
    <property type="entry name" value="U2 SMALL NUCLEAR RIBONUCLEOPROTEIN A"/>
    <property type="match status" value="1"/>
</dbReference>
<dbReference type="PANTHER" id="PTHR10552:SF6">
    <property type="entry name" value="U2 SMALL NUCLEAR RIBONUCLEOPROTEIN A"/>
    <property type="match status" value="1"/>
</dbReference>
<dbReference type="Pfam" id="PF14580">
    <property type="entry name" value="LRR_9"/>
    <property type="match status" value="1"/>
</dbReference>
<dbReference type="SUPFAM" id="SSF52058">
    <property type="entry name" value="L domain-like"/>
    <property type="match status" value="1"/>
</dbReference>
<dbReference type="PROSITE" id="PS51450">
    <property type="entry name" value="LRR"/>
    <property type="match status" value="3"/>
</dbReference>